<feature type="chain" id="PRO_0000123374" description="Myosin-A">
    <location>
        <begin position="1"/>
        <end position="818"/>
    </location>
</feature>
<feature type="domain" description="Myosin motor" evidence="3">
    <location>
        <begin position="97"/>
        <end position="771"/>
    </location>
</feature>
<feature type="region of interest" description="Actin-binding" evidence="2">
    <location>
        <begin position="661"/>
        <end position="671"/>
    </location>
</feature>
<feature type="region of interest" description="Tail">
    <location>
        <begin position="773"/>
        <end position="818"/>
    </location>
</feature>
<feature type="binding site" evidence="1">
    <location>
        <begin position="191"/>
        <end position="198"/>
    </location>
    <ligand>
        <name>ATP</name>
        <dbReference type="ChEBI" id="CHEBI:30616"/>
    </ligand>
</feature>
<feature type="modified residue" description="Phosphoserine; by PKG" evidence="5">
    <location>
        <position position="19"/>
    </location>
</feature>
<feature type="helix" evidence="13">
    <location>
        <begin position="5"/>
        <end position="14"/>
    </location>
</feature>
<feature type="strand" evidence="12">
    <location>
        <begin position="26"/>
        <end position="29"/>
    </location>
</feature>
<feature type="strand" evidence="13">
    <location>
        <begin position="35"/>
        <end position="39"/>
    </location>
</feature>
<feature type="helix" evidence="13">
    <location>
        <begin position="42"/>
        <end position="46"/>
    </location>
</feature>
<feature type="strand" evidence="13">
    <location>
        <begin position="53"/>
        <end position="57"/>
    </location>
</feature>
<feature type="strand" evidence="13">
    <location>
        <begin position="65"/>
        <end position="73"/>
    </location>
</feature>
<feature type="strand" evidence="13">
    <location>
        <begin position="80"/>
        <end position="82"/>
    </location>
</feature>
<feature type="helix" evidence="13">
    <location>
        <begin position="84"/>
        <end position="86"/>
    </location>
</feature>
<feature type="strand" evidence="13">
    <location>
        <begin position="87"/>
        <end position="89"/>
    </location>
</feature>
<feature type="helix" evidence="13">
    <location>
        <begin position="96"/>
        <end position="98"/>
    </location>
</feature>
<feature type="helix" evidence="13">
    <location>
        <begin position="102"/>
        <end position="104"/>
    </location>
</feature>
<feature type="helix" evidence="13">
    <location>
        <begin position="110"/>
        <end position="122"/>
    </location>
</feature>
<feature type="strand" evidence="13">
    <location>
        <begin position="127"/>
        <end position="130"/>
    </location>
</feature>
<feature type="strand" evidence="13">
    <location>
        <begin position="133"/>
        <end position="137"/>
    </location>
</feature>
<feature type="helix" evidence="13">
    <location>
        <begin position="148"/>
        <end position="156"/>
    </location>
</feature>
<feature type="helix" evidence="13">
    <location>
        <begin position="160"/>
        <end position="162"/>
    </location>
</feature>
<feature type="helix" evidence="13">
    <location>
        <begin position="167"/>
        <end position="181"/>
    </location>
</feature>
<feature type="strand" evidence="13">
    <location>
        <begin position="185"/>
        <end position="190"/>
    </location>
</feature>
<feature type="helix" evidence="13">
    <location>
        <begin position="197"/>
        <end position="208"/>
    </location>
</feature>
<feature type="strand" evidence="12">
    <location>
        <begin position="212"/>
        <end position="214"/>
    </location>
</feature>
<feature type="helix" evidence="13">
    <location>
        <begin position="218"/>
        <end position="235"/>
    </location>
</feature>
<feature type="strand" evidence="13">
    <location>
        <begin position="248"/>
        <end position="256"/>
    </location>
</feature>
<feature type="turn" evidence="12">
    <location>
        <begin position="258"/>
        <end position="260"/>
    </location>
</feature>
<feature type="strand" evidence="13">
    <location>
        <begin position="262"/>
        <end position="270"/>
    </location>
</feature>
<feature type="helix" evidence="13">
    <location>
        <begin position="274"/>
        <end position="277"/>
    </location>
</feature>
<feature type="helix" evidence="13">
    <location>
        <begin position="288"/>
        <end position="296"/>
    </location>
</feature>
<feature type="helix" evidence="13">
    <location>
        <begin position="299"/>
        <end position="305"/>
    </location>
</feature>
<feature type="helix" evidence="13">
    <location>
        <begin position="310"/>
        <end position="312"/>
    </location>
</feature>
<feature type="strand" evidence="12">
    <location>
        <begin position="314"/>
        <end position="316"/>
    </location>
</feature>
<feature type="helix" evidence="14">
    <location>
        <begin position="318"/>
        <end position="320"/>
    </location>
</feature>
<feature type="helix" evidence="13">
    <location>
        <begin position="328"/>
        <end position="341"/>
    </location>
</feature>
<feature type="helix" evidence="13">
    <location>
        <begin position="346"/>
        <end position="363"/>
    </location>
</feature>
<feature type="strand" evidence="13">
    <location>
        <begin position="367"/>
        <end position="370"/>
    </location>
</feature>
<feature type="helix" evidence="12">
    <location>
        <begin position="372"/>
        <end position="375"/>
    </location>
</feature>
<feature type="strand" evidence="13">
    <location>
        <begin position="378"/>
        <end position="381"/>
    </location>
</feature>
<feature type="helix" evidence="13">
    <location>
        <begin position="383"/>
        <end position="385"/>
    </location>
</feature>
<feature type="helix" evidence="13">
    <location>
        <begin position="386"/>
        <end position="395"/>
    </location>
</feature>
<feature type="helix" evidence="13">
    <location>
        <begin position="400"/>
        <end position="408"/>
    </location>
</feature>
<feature type="strand" evidence="13">
    <location>
        <begin position="409"/>
        <end position="414"/>
    </location>
</feature>
<feature type="strand" evidence="13">
    <location>
        <begin position="417"/>
        <end position="422"/>
    </location>
</feature>
<feature type="helix" evidence="13">
    <location>
        <begin position="425"/>
        <end position="455"/>
    </location>
</feature>
<feature type="strand" evidence="13">
    <location>
        <begin position="465"/>
        <end position="469"/>
    </location>
</feature>
<feature type="strand" evidence="13">
    <location>
        <begin position="477"/>
        <end position="479"/>
    </location>
</feature>
<feature type="helix" evidence="13">
    <location>
        <begin position="481"/>
        <end position="512"/>
    </location>
</feature>
<feature type="helix" evidence="13">
    <location>
        <begin position="516"/>
        <end position="518"/>
    </location>
</feature>
<feature type="helix" evidence="13">
    <location>
        <begin position="525"/>
        <end position="532"/>
    </location>
</feature>
<feature type="strand" evidence="13">
    <location>
        <begin position="534"/>
        <end position="537"/>
    </location>
</feature>
<feature type="helix" evidence="13">
    <location>
        <begin position="538"/>
        <end position="546"/>
    </location>
</feature>
<feature type="strand" evidence="12">
    <location>
        <begin position="548"/>
        <end position="550"/>
    </location>
</feature>
<feature type="helix" evidence="13">
    <location>
        <begin position="553"/>
        <end position="563"/>
    </location>
</feature>
<feature type="turn" evidence="11">
    <location>
        <begin position="564"/>
        <end position="566"/>
    </location>
</feature>
<feature type="strand" evidence="13">
    <location>
        <begin position="570"/>
        <end position="572"/>
    </location>
</feature>
<feature type="strand" evidence="13">
    <location>
        <begin position="574"/>
        <end position="576"/>
    </location>
</feature>
<feature type="strand" evidence="13">
    <location>
        <begin position="579"/>
        <end position="585"/>
    </location>
</feature>
<feature type="strand" evidence="13">
    <location>
        <begin position="588"/>
        <end position="593"/>
    </location>
</feature>
<feature type="helix" evidence="13">
    <location>
        <begin position="597"/>
        <end position="602"/>
    </location>
</feature>
<feature type="helix" evidence="13">
    <location>
        <begin position="608"/>
        <end position="614"/>
    </location>
</feature>
<feature type="helix" evidence="13">
    <location>
        <begin position="619"/>
        <end position="624"/>
    </location>
</feature>
<feature type="turn" evidence="13">
    <location>
        <begin position="625"/>
        <end position="627"/>
    </location>
</feature>
<feature type="helix" evidence="13">
    <location>
        <begin position="637"/>
        <end position="639"/>
    </location>
</feature>
<feature type="helix" evidence="13">
    <location>
        <begin position="641"/>
        <end position="657"/>
    </location>
</feature>
<feature type="strand" evidence="13">
    <location>
        <begin position="659"/>
        <end position="667"/>
    </location>
</feature>
<feature type="helix" evidence="13">
    <location>
        <begin position="680"/>
        <end position="689"/>
    </location>
</feature>
<feature type="helix" evidence="13">
    <location>
        <begin position="692"/>
        <end position="700"/>
    </location>
</feature>
<feature type="strand" evidence="13">
    <location>
        <begin position="701"/>
        <end position="703"/>
    </location>
</feature>
<feature type="strand" evidence="13">
    <location>
        <begin position="705"/>
        <end position="708"/>
    </location>
</feature>
<feature type="helix" evidence="13">
    <location>
        <begin position="709"/>
        <end position="716"/>
    </location>
</feature>
<feature type="helix" evidence="13">
    <location>
        <begin position="717"/>
        <end position="720"/>
    </location>
</feature>
<feature type="helix" evidence="13">
    <location>
        <begin position="721"/>
        <end position="724"/>
    </location>
</feature>
<feature type="strand" evidence="14">
    <location>
        <begin position="727"/>
        <end position="729"/>
    </location>
</feature>
<feature type="helix" evidence="13">
    <location>
        <begin position="731"/>
        <end position="742"/>
    </location>
</feature>
<feature type="helix" evidence="13">
    <location>
        <begin position="746"/>
        <end position="748"/>
    </location>
</feature>
<feature type="strand" evidence="13">
    <location>
        <begin position="749"/>
        <end position="751"/>
    </location>
</feature>
<feature type="strand" evidence="13">
    <location>
        <begin position="753"/>
        <end position="758"/>
    </location>
</feature>
<feature type="helix" evidence="13">
    <location>
        <begin position="760"/>
        <end position="773"/>
    </location>
</feature>
<feature type="helix" evidence="13">
    <location>
        <begin position="774"/>
        <end position="777"/>
    </location>
</feature>
<feature type="helix" evidence="13">
    <location>
        <begin position="778"/>
        <end position="799"/>
    </location>
</feature>
<feature type="helix" evidence="10">
    <location>
        <begin position="801"/>
        <end position="815"/>
    </location>
</feature>
<evidence type="ECO:0000250" key="1"/>
<evidence type="ECO:0000255" key="2"/>
<evidence type="ECO:0000255" key="3">
    <source>
        <dbReference type="PROSITE-ProRule" id="PRU00782"/>
    </source>
</evidence>
<evidence type="ECO:0000269" key="4">
    <source>
    </source>
</evidence>
<evidence type="ECO:0000269" key="5">
    <source>
    </source>
</evidence>
<evidence type="ECO:0000269" key="6">
    <source>
    </source>
</evidence>
<evidence type="ECO:0000305" key="7"/>
<evidence type="ECO:0007744" key="8">
    <source>
        <dbReference type="PDB" id="6TU7"/>
    </source>
</evidence>
<evidence type="ECO:0007744" key="9">
    <source>
        <dbReference type="PDB" id="7ALN"/>
    </source>
</evidence>
<evidence type="ECO:0007829" key="10">
    <source>
        <dbReference type="PDB" id="4MZJ"/>
    </source>
</evidence>
<evidence type="ECO:0007829" key="11">
    <source>
        <dbReference type="PDB" id="6I7D"/>
    </source>
</evidence>
<evidence type="ECO:0007829" key="12">
    <source>
        <dbReference type="PDB" id="6I7E"/>
    </source>
</evidence>
<evidence type="ECO:0007829" key="13">
    <source>
        <dbReference type="PDB" id="8A12"/>
    </source>
</evidence>
<evidence type="ECO:0007829" key="14">
    <source>
        <dbReference type="PDB" id="8CDM"/>
    </source>
</evidence>
<gene>
    <name evidence="7" type="primary">MyoA</name>
    <name type="ORF">PF13_0233</name>
    <name type="ORF">PF3D7_1342600</name>
</gene>
<name>MYOA_PLAF7</name>
<keyword id="KW-0002">3D-structure</keyword>
<keyword id="KW-0009">Actin-binding</keyword>
<keyword id="KW-0067">ATP-binding</keyword>
<keyword id="KW-1003">Cell membrane</keyword>
<keyword id="KW-0472">Membrane</keyword>
<keyword id="KW-0505">Motor protein</keyword>
<keyword id="KW-0518">Myosin</keyword>
<keyword id="KW-0547">Nucleotide-binding</keyword>
<keyword id="KW-0597">Phosphoprotein</keyword>
<keyword id="KW-1185">Reference proteome</keyword>
<reference key="1">
    <citation type="journal article" date="2002" name="Nature">
        <title>Genome sequence of the human malaria parasite Plasmodium falciparum.</title>
        <authorList>
            <person name="Gardner M.J."/>
            <person name="Hall N."/>
            <person name="Fung E."/>
            <person name="White O."/>
            <person name="Berriman M."/>
            <person name="Hyman R.W."/>
            <person name="Carlton J.M."/>
            <person name="Pain A."/>
            <person name="Nelson K.E."/>
            <person name="Bowman S."/>
            <person name="Paulsen I.T."/>
            <person name="James K.D."/>
            <person name="Eisen J.A."/>
            <person name="Rutherford K.M."/>
            <person name="Salzberg S.L."/>
            <person name="Craig A."/>
            <person name="Kyes S."/>
            <person name="Chan M.-S."/>
            <person name="Nene V."/>
            <person name="Shallom S.J."/>
            <person name="Suh B."/>
            <person name="Peterson J."/>
            <person name="Angiuoli S."/>
            <person name="Pertea M."/>
            <person name="Allen J."/>
            <person name="Selengut J."/>
            <person name="Haft D."/>
            <person name="Mather M.W."/>
            <person name="Vaidya A.B."/>
            <person name="Martin D.M.A."/>
            <person name="Fairlamb A.H."/>
            <person name="Fraunholz M.J."/>
            <person name="Roos D.S."/>
            <person name="Ralph S.A."/>
            <person name="McFadden G.I."/>
            <person name="Cummings L.M."/>
            <person name="Subramanian G.M."/>
            <person name="Mungall C."/>
            <person name="Venter J.C."/>
            <person name="Carucci D.J."/>
            <person name="Hoffman S.L."/>
            <person name="Newbold C."/>
            <person name="Davis R.W."/>
            <person name="Fraser C.M."/>
            <person name="Barrell B.G."/>
        </authorList>
    </citation>
    <scope>NUCLEOTIDE SEQUENCE [LARGE SCALE GENOMIC DNA]</scope>
    <source>
        <strain>3D7</strain>
    </source>
</reference>
<reference key="2">
    <citation type="journal article" date="2002" name="Nature">
        <title>Sequence of Plasmodium falciparum chromosomes 1, 3-9 and 13.</title>
        <authorList>
            <person name="Hall N."/>
            <person name="Pain A."/>
            <person name="Berriman M."/>
            <person name="Churcher C.M."/>
            <person name="Harris B."/>
            <person name="Harris D."/>
            <person name="Mungall K.L."/>
            <person name="Bowman S."/>
            <person name="Atkin R."/>
            <person name="Baker S."/>
            <person name="Barron A."/>
            <person name="Brooks K."/>
            <person name="Buckee C.O."/>
            <person name="Burrows C."/>
            <person name="Cherevach I."/>
            <person name="Chillingworth C."/>
            <person name="Chillingworth T."/>
            <person name="Christodoulou Z."/>
            <person name="Clark L."/>
            <person name="Clark R."/>
            <person name="Corton C."/>
            <person name="Cronin A."/>
            <person name="Davies R.M."/>
            <person name="Davis P."/>
            <person name="Dear P."/>
            <person name="Dearden F."/>
            <person name="Doggett J."/>
            <person name="Feltwell T."/>
            <person name="Goble A."/>
            <person name="Goodhead I."/>
            <person name="Gwilliam R."/>
            <person name="Hamlin N."/>
            <person name="Hance Z."/>
            <person name="Harper D."/>
            <person name="Hauser H."/>
            <person name="Hornsby T."/>
            <person name="Holroyd S."/>
            <person name="Horrocks P."/>
            <person name="Humphray S."/>
            <person name="Jagels K."/>
            <person name="James K.D."/>
            <person name="Johnson D."/>
            <person name="Kerhornou A."/>
            <person name="Knights A."/>
            <person name="Konfortov B."/>
            <person name="Kyes S."/>
            <person name="Larke N."/>
            <person name="Lawson D."/>
            <person name="Lennard N."/>
            <person name="Line A."/>
            <person name="Maddison M."/>
            <person name="Mclean J."/>
            <person name="Mooney P."/>
            <person name="Moule S."/>
            <person name="Murphy L."/>
            <person name="Oliver K."/>
            <person name="Ormond D."/>
            <person name="Price C."/>
            <person name="Quail M.A."/>
            <person name="Rabbinowitsch E."/>
            <person name="Rajandream M.A."/>
            <person name="Rutter S."/>
            <person name="Rutherford K.M."/>
            <person name="Sanders M."/>
            <person name="Simmonds M."/>
            <person name="Seeger K."/>
            <person name="Sharp S."/>
            <person name="Smith R."/>
            <person name="Squares R."/>
            <person name="Squares S."/>
            <person name="Stevens K."/>
            <person name="Taylor K."/>
            <person name="Tivey A."/>
            <person name="Unwin L."/>
            <person name="Whitehead S."/>
            <person name="Woodward J.R."/>
            <person name="Sulston J.E."/>
            <person name="Craig A."/>
            <person name="Newbold C."/>
            <person name="Barrell B.G."/>
        </authorList>
    </citation>
    <scope>NUCLEOTIDE SEQUENCE [LARGE SCALE GENOMIC DNA]</scope>
    <source>
        <strain>3D7</strain>
    </source>
</reference>
<reference key="3">
    <citation type="journal article" date="2006" name="Mol. Biochem. Parasitol.">
        <title>Dual acylation of the 45 kDa gliding-associated protein (GAP45) in Plasmodium falciparum merozoites.</title>
        <authorList>
            <person name="Rees-Channer R.R."/>
            <person name="Martin S.R."/>
            <person name="Green J.L."/>
            <person name="Bowyer P.W."/>
            <person name="Grainger M."/>
            <person name="Molloy J.E."/>
            <person name="Holder A.A."/>
        </authorList>
    </citation>
    <scope>IDENTIFICATION IN THE GLIDEOSOME COMPLEX</scope>
    <scope>DEVELOPMENTAL STAGE</scope>
</reference>
<reference key="4">
    <citation type="journal article" date="2015" name="Nat. Commun.">
        <title>Phosphoproteomics reveals malaria parasite Protein Kinase G as a signalling hub regulating egress and invasion.</title>
        <authorList>
            <person name="Alam M.M."/>
            <person name="Solyakov L."/>
            <person name="Bottrill A.R."/>
            <person name="Flueck C."/>
            <person name="Siddiqui F.A."/>
            <person name="Singh S."/>
            <person name="Mistry S."/>
            <person name="Viskaduraki M."/>
            <person name="Lee K."/>
            <person name="Hopp C.S."/>
            <person name="Chitnis C.E."/>
            <person name="Doerig C."/>
            <person name="Moon R.W."/>
            <person name="Green J.L."/>
            <person name="Holder A.A."/>
            <person name="Baker D.A."/>
            <person name="Tobin A.B."/>
        </authorList>
    </citation>
    <scope>DEVELOPMENTAL STAGE</scope>
    <scope>IDENTIFICATION BY MASS SPECTROMETRY</scope>
    <scope>PHOSPHORYLATION AT SER-19</scope>
</reference>
<reference evidence="8" key="5">
    <citation type="submission" date="2020-01" db="PDB data bank">
        <title>Malaria parasite actomyosin rigor-state structure at near-atomic resolution.</title>
        <authorList>
            <person name="Vahokoski J."/>
            <person name="Calder L.J."/>
            <person name="Lopez A.J."/>
            <person name="Molloy J.E."/>
            <person name="Rosenthal P.B."/>
            <person name="Kursula I."/>
        </authorList>
    </citation>
    <scope>STRUCTURE BY ELECTRON MICROSCOPY (3.10 ANGSTROMS) OF 2-818 IN COMPLEX WITH ACT1 AND JASPLAKINOLIDE</scope>
</reference>
<reference evidence="9" key="6">
    <citation type="journal article" date="2021" name="Nat. Commun.">
        <title>The actomyosin interface contains an evolutionary conserved core and an ancillary interface involved in specificity.</title>
        <authorList>
            <person name="Robert-Paganin J."/>
            <person name="Xu X.P."/>
            <person name="Swift M.F."/>
            <person name="Auguin D."/>
            <person name="Robblee J.P."/>
            <person name="Lu H."/>
            <person name="Fagnant P.M."/>
            <person name="Krementsova E.B."/>
            <person name="Trybus K.M."/>
            <person name="Houdusse A."/>
            <person name="Volkmann N."/>
            <person name="Hanein D."/>
        </authorList>
    </citation>
    <scope>STRUCTURE BY ELECTRON MICROSCOPY (3.77 ANGSTROMS) OF MUTANT ASP-417 AND IN COMPLEX WITH ACT1 AND JASPLAKINOLIDE</scope>
</reference>
<accession>Q8IDR3</accession>
<comment type="function">
    <text evidence="1">Myosins are actin-based motor molecules with ATPase activity. Unconventional myosins serve in intracellular movements. Their highly divergent tails are presumed to bind to membranous compartments, which would be moved relative to actin filaments (By similarity).</text>
</comment>
<comment type="subunit">
    <text evidence="4 6">Component of the glideosome complex composed of GAP50, GAP45, MTIP and MyoA; the complex is formed during the late schizont stage and in merozoites (PubMed:16750579). MyoA, MTIP and GAP45 probably form an initial complex in the cytoplasm which is then recruited to the outer face of the inner membrane complex via the interaction with GAP50 (PubMed:16750579). Interacts with ACT1.</text>
</comment>
<comment type="subcellular location">
    <subcellularLocation>
        <location evidence="1">Cell membrane</location>
        <topology evidence="1">Peripheral membrane protein</topology>
        <orientation evidence="1">Cytoplasmic side</orientation>
    </subcellularLocation>
    <text evidence="1">Tightly associated with the plasma membrane.</text>
</comment>
<comment type="developmental stage">
    <text evidence="4 5">Expressed during the asexual blood stage (at protein level).</text>
</comment>
<comment type="domain">
    <text>This protein differs from the typical myosin heavy chain structure in having head and tail domains but no discernible neck domain.</text>
</comment>
<comment type="similarity">
    <text evidence="7">Belongs to the TRAFAC class myosin-kinesin ATPase superfamily. Myosin family.</text>
</comment>
<dbReference type="EMBL" id="AL844509">
    <property type="protein sequence ID" value="CAD52556.1"/>
    <property type="molecule type" value="Genomic_DNA"/>
</dbReference>
<dbReference type="RefSeq" id="XP_001350147.1">
    <property type="nucleotide sequence ID" value="XM_001350111.1"/>
</dbReference>
<dbReference type="PDB" id="4AOM">
    <property type="method" value="X-ray"/>
    <property type="resolution" value="1.94 A"/>
    <property type="chains" value="T=799-816"/>
</dbReference>
<dbReference type="PDB" id="4MZJ">
    <property type="method" value="X-ray"/>
    <property type="resolution" value="1.47 A"/>
    <property type="chains" value="T=799-816"/>
</dbReference>
<dbReference type="PDB" id="4MZK">
    <property type="method" value="X-ray"/>
    <property type="resolution" value="1.82 A"/>
    <property type="chains" value="T=799-816"/>
</dbReference>
<dbReference type="PDB" id="4MZL">
    <property type="method" value="X-ray"/>
    <property type="resolution" value="2.01 A"/>
    <property type="chains" value="C/D=800-816"/>
</dbReference>
<dbReference type="PDB" id="4R1E">
    <property type="method" value="X-ray"/>
    <property type="resolution" value="1.98 A"/>
    <property type="chains" value="B=803-816"/>
</dbReference>
<dbReference type="PDB" id="6I7D">
    <property type="method" value="X-ray"/>
    <property type="resolution" value="2.82 A"/>
    <property type="chains" value="A/B/C/D=1-768"/>
</dbReference>
<dbReference type="PDB" id="6I7E">
    <property type="method" value="X-ray"/>
    <property type="resolution" value="3.49 A"/>
    <property type="chains" value="A=1-768"/>
</dbReference>
<dbReference type="PDB" id="6TU7">
    <property type="method" value="EM"/>
    <property type="resolution" value="3.10 A"/>
    <property type="chains" value="AP1/GP1=2-818"/>
</dbReference>
<dbReference type="PDB" id="6YCX">
    <property type="method" value="X-ray"/>
    <property type="resolution" value="3.99 A"/>
    <property type="chains" value="A/B=1-818"/>
</dbReference>
<dbReference type="PDB" id="6YCY">
    <property type="method" value="X-ray"/>
    <property type="resolution" value="2.55 A"/>
    <property type="chains" value="A=1-818"/>
</dbReference>
<dbReference type="PDB" id="6YCZ">
    <property type="method" value="X-ray"/>
    <property type="resolution" value="3.27 A"/>
    <property type="chains" value="A=1-818"/>
</dbReference>
<dbReference type="PDB" id="6ZN3">
    <property type="method" value="X-ray"/>
    <property type="resolution" value="2.51 A"/>
    <property type="chains" value="C/F/I/L/O=775-816"/>
</dbReference>
<dbReference type="PDB" id="7ALN">
    <property type="method" value="EM"/>
    <property type="resolution" value="3.77 A"/>
    <property type="chains" value="F=1-818"/>
</dbReference>
<dbReference type="PDB" id="8A12">
    <property type="method" value="X-ray"/>
    <property type="resolution" value="2.03 A"/>
    <property type="chains" value="A=1-818"/>
</dbReference>
<dbReference type="PDB" id="8CDM">
    <property type="method" value="X-ray"/>
    <property type="resolution" value="2.35 A"/>
    <property type="chains" value="A=1-818"/>
</dbReference>
<dbReference type="PDB" id="8CDQ">
    <property type="method" value="X-ray"/>
    <property type="resolution" value="2.21 A"/>
    <property type="chains" value="A=1-818"/>
</dbReference>
<dbReference type="PDBsum" id="4AOM"/>
<dbReference type="PDBsum" id="4MZJ"/>
<dbReference type="PDBsum" id="4MZK"/>
<dbReference type="PDBsum" id="4MZL"/>
<dbReference type="PDBsum" id="4R1E"/>
<dbReference type="PDBsum" id="6I7D"/>
<dbReference type="PDBsum" id="6I7E"/>
<dbReference type="PDBsum" id="6TU7"/>
<dbReference type="PDBsum" id="6YCX"/>
<dbReference type="PDBsum" id="6YCY"/>
<dbReference type="PDBsum" id="6YCZ"/>
<dbReference type="PDBsum" id="6ZN3"/>
<dbReference type="PDBsum" id="7ALN"/>
<dbReference type="PDBsum" id="8A12"/>
<dbReference type="PDBsum" id="8CDM"/>
<dbReference type="PDBsum" id="8CDQ"/>
<dbReference type="EMDB" id="EMD-10590"/>
<dbReference type="EMDB" id="EMD-11818"/>
<dbReference type="SASBDB" id="Q8IDR3"/>
<dbReference type="SMR" id="Q8IDR3"/>
<dbReference type="BioGRID" id="1209455">
    <property type="interactions" value="4"/>
</dbReference>
<dbReference type="FunCoup" id="Q8IDR3">
    <property type="interactions" value="4"/>
</dbReference>
<dbReference type="IntAct" id="Q8IDR3">
    <property type="interactions" value="4"/>
</dbReference>
<dbReference type="STRING" id="36329.Q8IDR3"/>
<dbReference type="iPTMnet" id="Q8IDR3"/>
<dbReference type="PaxDb" id="5833-PF13_0233"/>
<dbReference type="EnsemblProtists" id="CAD52556">
    <property type="protein sequence ID" value="CAD52556"/>
    <property type="gene ID" value="PF3D7_1342600"/>
</dbReference>
<dbReference type="GeneID" id="814200"/>
<dbReference type="KEGG" id="pfa:PF3D7_1342600"/>
<dbReference type="VEuPathDB" id="PlasmoDB:PF3D7_1342600"/>
<dbReference type="HOGENOM" id="CLU_000192_7_5_1"/>
<dbReference type="InParanoid" id="Q8IDR3"/>
<dbReference type="OMA" id="MTYGDIG"/>
<dbReference type="OrthoDB" id="312459at2759"/>
<dbReference type="PhylomeDB" id="Q8IDR3"/>
<dbReference type="Proteomes" id="UP000001450">
    <property type="component" value="Chromosome 13"/>
</dbReference>
<dbReference type="GO" id="GO:0015629">
    <property type="term" value="C:actin cytoskeleton"/>
    <property type="evidence" value="ECO:0000318"/>
    <property type="project" value="GO_Central"/>
</dbReference>
<dbReference type="GO" id="GO:0005737">
    <property type="term" value="C:cytoplasm"/>
    <property type="evidence" value="ECO:0000318"/>
    <property type="project" value="GO_Central"/>
</dbReference>
<dbReference type="GO" id="GO:0160055">
    <property type="term" value="C:glideosome"/>
    <property type="evidence" value="ECO:0000314"/>
    <property type="project" value="UniProtKB"/>
</dbReference>
<dbReference type="GO" id="GO:0070258">
    <property type="term" value="C:inner membrane pellicle complex"/>
    <property type="evidence" value="ECO:0000314"/>
    <property type="project" value="GeneDB"/>
</dbReference>
<dbReference type="GO" id="GO:0016020">
    <property type="term" value="C:membrane"/>
    <property type="evidence" value="ECO:0000318"/>
    <property type="project" value="GO_Central"/>
</dbReference>
<dbReference type="GO" id="GO:0016459">
    <property type="term" value="C:myosin complex"/>
    <property type="evidence" value="ECO:0000314"/>
    <property type="project" value="GeneDB"/>
</dbReference>
<dbReference type="GO" id="GO:0020039">
    <property type="term" value="C:pellicle"/>
    <property type="evidence" value="ECO:0000314"/>
    <property type="project" value="GeneDB"/>
</dbReference>
<dbReference type="GO" id="GO:0005886">
    <property type="term" value="C:plasma membrane"/>
    <property type="evidence" value="ECO:0000314"/>
    <property type="project" value="GeneDB"/>
</dbReference>
<dbReference type="GO" id="GO:0003779">
    <property type="term" value="F:actin binding"/>
    <property type="evidence" value="ECO:0000314"/>
    <property type="project" value="GeneDB"/>
</dbReference>
<dbReference type="GO" id="GO:0051015">
    <property type="term" value="F:actin filament binding"/>
    <property type="evidence" value="ECO:0000314"/>
    <property type="project" value="UniProtKB"/>
</dbReference>
<dbReference type="GO" id="GO:0005524">
    <property type="term" value="F:ATP binding"/>
    <property type="evidence" value="ECO:0000314"/>
    <property type="project" value="GeneDB"/>
</dbReference>
<dbReference type="GO" id="GO:0003774">
    <property type="term" value="F:cytoskeletal motor activity"/>
    <property type="evidence" value="ECO:0000314"/>
    <property type="project" value="UniProtKB"/>
</dbReference>
<dbReference type="GO" id="GO:0000146">
    <property type="term" value="F:microfilament motor activity"/>
    <property type="evidence" value="ECO:0000318"/>
    <property type="project" value="GO_Central"/>
</dbReference>
<dbReference type="GO" id="GO:0007015">
    <property type="term" value="P:actin filament organization"/>
    <property type="evidence" value="ECO:0000318"/>
    <property type="project" value="GO_Central"/>
</dbReference>
<dbReference type="CDD" id="cd14876">
    <property type="entry name" value="MYSc_Myo14"/>
    <property type="match status" value="1"/>
</dbReference>
<dbReference type="FunFam" id="1.10.10.820:FF:000001">
    <property type="entry name" value="Myosin heavy chain"/>
    <property type="match status" value="1"/>
</dbReference>
<dbReference type="FunFam" id="1.20.58.530:FF:000019">
    <property type="entry name" value="Myosin-A"/>
    <property type="match status" value="1"/>
</dbReference>
<dbReference type="Gene3D" id="1.10.10.820">
    <property type="match status" value="1"/>
</dbReference>
<dbReference type="Gene3D" id="1.20.5.4820">
    <property type="match status" value="1"/>
</dbReference>
<dbReference type="Gene3D" id="1.20.58.530">
    <property type="match status" value="1"/>
</dbReference>
<dbReference type="Gene3D" id="3.40.850.10">
    <property type="entry name" value="Kinesin motor domain"/>
    <property type="match status" value="1"/>
</dbReference>
<dbReference type="Gene3D" id="1.20.120.720">
    <property type="entry name" value="Myosin VI head, motor domain, U50 subdomain"/>
    <property type="match status" value="1"/>
</dbReference>
<dbReference type="InterPro" id="IPR036961">
    <property type="entry name" value="Kinesin_motor_dom_sf"/>
</dbReference>
<dbReference type="InterPro" id="IPR001609">
    <property type="entry name" value="Myosin_head_motor_dom-like"/>
</dbReference>
<dbReference type="InterPro" id="IPR036044">
    <property type="entry name" value="MYSc_Myo14"/>
</dbReference>
<dbReference type="InterPro" id="IPR027417">
    <property type="entry name" value="P-loop_NTPase"/>
</dbReference>
<dbReference type="PANTHER" id="PTHR13140">
    <property type="entry name" value="MYOSIN"/>
    <property type="match status" value="1"/>
</dbReference>
<dbReference type="PANTHER" id="PTHR13140:SF270">
    <property type="entry name" value="MYOSIN-12"/>
    <property type="match status" value="1"/>
</dbReference>
<dbReference type="Pfam" id="PF00063">
    <property type="entry name" value="Myosin_head"/>
    <property type="match status" value="1"/>
</dbReference>
<dbReference type="PRINTS" id="PR00193">
    <property type="entry name" value="MYOSINHEAVY"/>
</dbReference>
<dbReference type="SMART" id="SM00242">
    <property type="entry name" value="MYSc"/>
    <property type="match status" value="1"/>
</dbReference>
<dbReference type="SUPFAM" id="SSF52540">
    <property type="entry name" value="P-loop containing nucleoside triphosphate hydrolases"/>
    <property type="match status" value="1"/>
</dbReference>
<dbReference type="PROSITE" id="PS51456">
    <property type="entry name" value="MYOSIN_MOTOR"/>
    <property type="match status" value="1"/>
</dbReference>
<sequence length="818" mass="92277">MAVTNEEIKTASKIVRRVSNVEAFDKSGSVFKGYQIWTDISPTIENDPNIMFVKCVVQQGSKKEKLTVVQIDPPGTGTPYDIDPTHAWNCNSQVDPMSFGDIGLLNHTNIPCVLDFLKHRYLKNQIYTTAVPLIVAINPYKDLGNTTNEWIRRYRDTADHTKLPPHVFTCAREALSNLHGVNKSQTIIVSGESGAGKTEATKQIMRYFASSKSGNMDLRIQTAIMAANPVLEAFGNAKTIRNNNSSRFGRFMQLVISHEGGIRYGSVVAFLLEKSRIITQDDNERSYHIFYQFLKGANSTMKSKFGLKGVTEYKLLNPNSTEVSGVDDVKDFEEVIESLKNMELSESDIEVIFSIVAGILTLGNVRLIEKQEAGLSDAAAIMDEDMGVFNKACELMYLDPELIKREILIKVTVAGGTKIEGRWNKNDAEVLKSSLCKAMYEKLFLWIIRHLNSRIEPEGGFKTFMGMLDIFGFEVFKNNSLEQLFINITNEMLQKNFVDIVFERESKLYKDEGISTAELKYTSNKEVINVLCEKGKSVLSYLEDQCLAPGGTDEKFVSSCATNLKENNKFTPAKVASNKNFIIQHTIGPIQYCAESFLLKNKDVLRGDLVEVIKDSPNPIVQQLFEGQVIEKGKIAKGSLIGSQFLNQLTSLMNLINSTEPHFIRCIKPNENKKPLEWCEPKILIQLHALSILEALVLRQLGYSYRRTFEEFLYQYKFVDIAAAEDSSVENQNKCVNILKLSGLSESMYKIGKSMVFLKQEGAKILTKIQREKLVEWENCVSVIEAAILKHKYKQKVNKNIPSLLRVQAHIRKKMVAQ</sequence>
<protein>
    <recommendedName>
        <fullName>Myosin-A</fullName>
    </recommendedName>
    <alternativeName>
        <fullName>PfMyoA</fullName>
    </alternativeName>
</protein>
<organism>
    <name type="scientific">Plasmodium falciparum (isolate 3D7)</name>
    <dbReference type="NCBI Taxonomy" id="36329"/>
    <lineage>
        <taxon>Eukaryota</taxon>
        <taxon>Sar</taxon>
        <taxon>Alveolata</taxon>
        <taxon>Apicomplexa</taxon>
        <taxon>Aconoidasida</taxon>
        <taxon>Haemosporida</taxon>
        <taxon>Plasmodiidae</taxon>
        <taxon>Plasmodium</taxon>
        <taxon>Plasmodium (Laverania)</taxon>
    </lineage>
</organism>
<proteinExistence type="evidence at protein level"/>